<evidence type="ECO:0000250" key="1"/>
<evidence type="ECO:0000255" key="2"/>
<evidence type="ECO:0000305" key="3"/>
<protein>
    <recommendedName>
        <fullName>Probable multidrug-efflux transporter MT1670</fullName>
    </recommendedName>
</protein>
<sequence length="471" mass="47713">MTETASETGSWRELLSRYLGTSIVLAGGVALYATNEFLTISLLPSTIADIGGSRLYAWVTTLYLVGSVVAATTVNTMLLRVGARSSYLMGLAVFGLASLVCAAAPSMQILVAGRTLQGIAGGLLAGLGYALINSTLPKSLWTRGSALVSAMWGVATLIGPATGGLFAQLGLWRWAFGVMTLLTALMAMLVPVALGAGGVGPGGETPVGSTHKVPVWSLLLMGAAALAISVAALPNYLVQTAGLLAAAALLVAVFVVVDWRIHAAVLPPSVFGSGPLKWIYLTMSVQMIAAMVDTYVPLFGQRLGHLTPVAAGFLGAALAVGWTVGEVASASLNSARVIGHVVAAAPLVMASGLALGAVTQRADAPVGIIALWALALLIIGTGIGIAWPHLTVRAMDSVADPAESSAAAAAINVVQLISGAFGAGLAGVVVNTAKGGEVAAARGLYMAFTVLAAAGVIASYQATHRDRRLPR</sequence>
<feature type="chain" id="PRO_0000427755" description="Probable multidrug-efflux transporter MT1670">
    <location>
        <begin position="1"/>
        <end position="471"/>
    </location>
</feature>
<feature type="transmembrane region" description="Helical" evidence="2">
    <location>
        <begin position="23"/>
        <end position="43"/>
    </location>
</feature>
<feature type="transmembrane region" description="Helical" evidence="2">
    <location>
        <begin position="55"/>
        <end position="75"/>
    </location>
</feature>
<feature type="transmembrane region" description="Helical" evidence="2">
    <location>
        <begin position="91"/>
        <end position="111"/>
    </location>
</feature>
<feature type="transmembrane region" description="Helical" evidence="2">
    <location>
        <begin position="116"/>
        <end position="136"/>
    </location>
</feature>
<feature type="transmembrane region" description="Helical" evidence="2">
    <location>
        <begin position="146"/>
        <end position="166"/>
    </location>
</feature>
<feature type="transmembrane region" description="Helical" evidence="2">
    <location>
        <begin position="174"/>
        <end position="194"/>
    </location>
</feature>
<feature type="transmembrane region" description="Helical" evidence="2">
    <location>
        <begin position="213"/>
        <end position="233"/>
    </location>
</feature>
<feature type="transmembrane region" description="Helical" evidence="2">
    <location>
        <begin position="237"/>
        <end position="257"/>
    </location>
</feature>
<feature type="transmembrane region" description="Helical" evidence="2">
    <location>
        <begin position="279"/>
        <end position="299"/>
    </location>
</feature>
<feature type="transmembrane region" description="Helical" evidence="2">
    <location>
        <begin position="308"/>
        <end position="328"/>
    </location>
</feature>
<feature type="transmembrane region" description="Helical" evidence="2">
    <location>
        <begin position="337"/>
        <end position="357"/>
    </location>
</feature>
<feature type="transmembrane region" description="Helical" evidence="2">
    <location>
        <begin position="366"/>
        <end position="386"/>
    </location>
</feature>
<feature type="transmembrane region" description="Helical" evidence="2">
    <location>
        <begin position="410"/>
        <end position="430"/>
    </location>
</feature>
<feature type="transmembrane region" description="Helical" evidence="2">
    <location>
        <begin position="438"/>
        <end position="458"/>
    </location>
</feature>
<accession>P9WJX2</accession>
<accession>L0TA74</accession>
<accession>O06151</accession>
<accession>Q7D886</accession>
<comment type="function">
    <text evidence="1">Could be involved in fluoroquinolones efflux.</text>
</comment>
<comment type="subcellular location">
    <subcellularLocation>
        <location evidence="3">Cell membrane</location>
        <topology evidence="3">Multi-pass membrane protein</topology>
    </subcellularLocation>
</comment>
<comment type="similarity">
    <text evidence="3">Belongs to the major facilitator superfamily.</text>
</comment>
<gene>
    <name type="ordered locus">MT1670</name>
</gene>
<dbReference type="EMBL" id="AE000516">
    <property type="protein sequence ID" value="AAK45940.1"/>
    <property type="molecule type" value="Genomic_DNA"/>
</dbReference>
<dbReference type="PIR" id="H70559">
    <property type="entry name" value="H70559"/>
</dbReference>
<dbReference type="RefSeq" id="WP_003898954.1">
    <property type="nucleotide sequence ID" value="NZ_KK341227.1"/>
</dbReference>
<dbReference type="SMR" id="P9WJX2"/>
<dbReference type="KEGG" id="mtc:MT1670"/>
<dbReference type="PATRIC" id="fig|83331.31.peg.1795"/>
<dbReference type="HOGENOM" id="CLU_000960_2_6_11"/>
<dbReference type="Proteomes" id="UP000001020">
    <property type="component" value="Chromosome"/>
</dbReference>
<dbReference type="GO" id="GO:0005886">
    <property type="term" value="C:plasma membrane"/>
    <property type="evidence" value="ECO:0007669"/>
    <property type="project" value="UniProtKB-SubCell"/>
</dbReference>
<dbReference type="GO" id="GO:0022857">
    <property type="term" value="F:transmembrane transporter activity"/>
    <property type="evidence" value="ECO:0007669"/>
    <property type="project" value="InterPro"/>
</dbReference>
<dbReference type="GO" id="GO:0046677">
    <property type="term" value="P:response to antibiotic"/>
    <property type="evidence" value="ECO:0007669"/>
    <property type="project" value="UniProtKB-KW"/>
</dbReference>
<dbReference type="FunFam" id="1.20.1250.20:FF:000887">
    <property type="entry name" value="Probable multidrug-efflux transporter MT1670"/>
    <property type="match status" value="1"/>
</dbReference>
<dbReference type="Gene3D" id="1.20.1250.20">
    <property type="entry name" value="MFS general substrate transporter like domains"/>
    <property type="match status" value="2"/>
</dbReference>
<dbReference type="InterPro" id="IPR011701">
    <property type="entry name" value="MFS"/>
</dbReference>
<dbReference type="InterPro" id="IPR020846">
    <property type="entry name" value="MFS_dom"/>
</dbReference>
<dbReference type="InterPro" id="IPR036259">
    <property type="entry name" value="MFS_trans_sf"/>
</dbReference>
<dbReference type="PANTHER" id="PTHR23501">
    <property type="entry name" value="MAJOR FACILITATOR SUPERFAMILY"/>
    <property type="match status" value="1"/>
</dbReference>
<dbReference type="PANTHER" id="PTHR23501:SF154">
    <property type="entry name" value="MULTIDRUG-EFFLUX TRANSPORTER RV1634-RELATED"/>
    <property type="match status" value="1"/>
</dbReference>
<dbReference type="Pfam" id="PF07690">
    <property type="entry name" value="MFS_1"/>
    <property type="match status" value="1"/>
</dbReference>
<dbReference type="SUPFAM" id="SSF103473">
    <property type="entry name" value="MFS general substrate transporter"/>
    <property type="match status" value="1"/>
</dbReference>
<dbReference type="PROSITE" id="PS50850">
    <property type="entry name" value="MFS"/>
    <property type="match status" value="1"/>
</dbReference>
<reference key="1">
    <citation type="journal article" date="2002" name="J. Bacteriol.">
        <title>Whole-genome comparison of Mycobacterium tuberculosis clinical and laboratory strains.</title>
        <authorList>
            <person name="Fleischmann R.D."/>
            <person name="Alland D."/>
            <person name="Eisen J.A."/>
            <person name="Carpenter L."/>
            <person name="White O."/>
            <person name="Peterson J.D."/>
            <person name="DeBoy R.T."/>
            <person name="Dodson R.J."/>
            <person name="Gwinn M.L."/>
            <person name="Haft D.H."/>
            <person name="Hickey E.K."/>
            <person name="Kolonay J.F."/>
            <person name="Nelson W.C."/>
            <person name="Umayam L.A."/>
            <person name="Ermolaeva M.D."/>
            <person name="Salzberg S.L."/>
            <person name="Delcher A."/>
            <person name="Utterback T.R."/>
            <person name="Weidman J.F."/>
            <person name="Khouri H.M."/>
            <person name="Gill J."/>
            <person name="Mikula A."/>
            <person name="Bishai W."/>
            <person name="Jacobs W.R. Jr."/>
            <person name="Venter J.C."/>
            <person name="Fraser C.M."/>
        </authorList>
    </citation>
    <scope>NUCLEOTIDE SEQUENCE [LARGE SCALE GENOMIC DNA]</scope>
    <source>
        <strain>CDC 1551 / Oshkosh</strain>
    </source>
</reference>
<organism>
    <name type="scientific">Mycobacterium tuberculosis (strain CDC 1551 / Oshkosh)</name>
    <dbReference type="NCBI Taxonomy" id="83331"/>
    <lineage>
        <taxon>Bacteria</taxon>
        <taxon>Bacillati</taxon>
        <taxon>Actinomycetota</taxon>
        <taxon>Actinomycetes</taxon>
        <taxon>Mycobacteriales</taxon>
        <taxon>Mycobacteriaceae</taxon>
        <taxon>Mycobacterium</taxon>
        <taxon>Mycobacterium tuberculosis complex</taxon>
    </lineage>
</organism>
<keyword id="KW-0046">Antibiotic resistance</keyword>
<keyword id="KW-1003">Cell membrane</keyword>
<keyword id="KW-0472">Membrane</keyword>
<keyword id="KW-1185">Reference proteome</keyword>
<keyword id="KW-0812">Transmembrane</keyword>
<keyword id="KW-1133">Transmembrane helix</keyword>
<keyword id="KW-0813">Transport</keyword>
<proteinExistence type="inferred from homology"/>
<name>Y1634_MYCTO</name>